<proteinExistence type="inferred from homology"/>
<protein>
    <recommendedName>
        <fullName evidence="1">Ribonuclease P protein component</fullName>
        <shortName evidence="1">RNase P protein</shortName>
        <shortName evidence="1">RNaseP protein</shortName>
        <ecNumber evidence="1">3.1.26.5</ecNumber>
    </recommendedName>
    <alternativeName>
        <fullName evidence="1">Protein C5</fullName>
    </alternativeName>
</protein>
<gene>
    <name evidence="1" type="primary">rnpA</name>
    <name type="ordered locus">SA2502</name>
</gene>
<dbReference type="EC" id="3.1.26.5" evidence="1"/>
<dbReference type="EMBL" id="BA000018">
    <property type="protein sequence ID" value="BAB43810.1"/>
    <property type="molecule type" value="Genomic_DNA"/>
</dbReference>
<dbReference type="PIR" id="H90080">
    <property type="entry name" value="H90080"/>
</dbReference>
<dbReference type="SMR" id="P66689"/>
<dbReference type="EnsemblBacteria" id="BAB43810">
    <property type="protein sequence ID" value="BAB43810"/>
    <property type="gene ID" value="BAB43810"/>
</dbReference>
<dbReference type="KEGG" id="sau:SA2502"/>
<dbReference type="HOGENOM" id="CLU_117179_9_1_9"/>
<dbReference type="GO" id="GO:0030677">
    <property type="term" value="C:ribonuclease P complex"/>
    <property type="evidence" value="ECO:0007669"/>
    <property type="project" value="TreeGrafter"/>
</dbReference>
<dbReference type="GO" id="GO:0042781">
    <property type="term" value="F:3'-tRNA processing endoribonuclease activity"/>
    <property type="evidence" value="ECO:0007669"/>
    <property type="project" value="TreeGrafter"/>
</dbReference>
<dbReference type="GO" id="GO:0004526">
    <property type="term" value="F:ribonuclease P activity"/>
    <property type="evidence" value="ECO:0007669"/>
    <property type="project" value="UniProtKB-UniRule"/>
</dbReference>
<dbReference type="GO" id="GO:0000049">
    <property type="term" value="F:tRNA binding"/>
    <property type="evidence" value="ECO:0007669"/>
    <property type="project" value="UniProtKB-UniRule"/>
</dbReference>
<dbReference type="GO" id="GO:0001682">
    <property type="term" value="P:tRNA 5'-leader removal"/>
    <property type="evidence" value="ECO:0007669"/>
    <property type="project" value="UniProtKB-UniRule"/>
</dbReference>
<dbReference type="FunFam" id="3.30.230.10:FF:000021">
    <property type="entry name" value="Ribonuclease P protein component"/>
    <property type="match status" value="1"/>
</dbReference>
<dbReference type="Gene3D" id="3.30.230.10">
    <property type="match status" value="1"/>
</dbReference>
<dbReference type="HAMAP" id="MF_00227">
    <property type="entry name" value="RNase_P"/>
    <property type="match status" value="1"/>
</dbReference>
<dbReference type="InterPro" id="IPR020568">
    <property type="entry name" value="Ribosomal_Su5_D2-typ_SF"/>
</dbReference>
<dbReference type="InterPro" id="IPR014721">
    <property type="entry name" value="Ribsml_uS5_D2-typ_fold_subgr"/>
</dbReference>
<dbReference type="InterPro" id="IPR000100">
    <property type="entry name" value="RNase_P"/>
</dbReference>
<dbReference type="InterPro" id="IPR020539">
    <property type="entry name" value="RNase_P_CS"/>
</dbReference>
<dbReference type="NCBIfam" id="TIGR00188">
    <property type="entry name" value="rnpA"/>
    <property type="match status" value="1"/>
</dbReference>
<dbReference type="PANTHER" id="PTHR33992">
    <property type="entry name" value="RIBONUCLEASE P PROTEIN COMPONENT"/>
    <property type="match status" value="1"/>
</dbReference>
<dbReference type="PANTHER" id="PTHR33992:SF1">
    <property type="entry name" value="RIBONUCLEASE P PROTEIN COMPONENT"/>
    <property type="match status" value="1"/>
</dbReference>
<dbReference type="Pfam" id="PF00825">
    <property type="entry name" value="Ribonuclease_P"/>
    <property type="match status" value="1"/>
</dbReference>
<dbReference type="SUPFAM" id="SSF54211">
    <property type="entry name" value="Ribosomal protein S5 domain 2-like"/>
    <property type="match status" value="1"/>
</dbReference>
<dbReference type="PROSITE" id="PS00648">
    <property type="entry name" value="RIBONUCLEASE_P"/>
    <property type="match status" value="1"/>
</dbReference>
<comment type="function">
    <text evidence="1">RNaseP catalyzes the removal of the 5'-leader sequence from pre-tRNA to produce the mature 5'-terminus. It can also cleave other RNA substrates such as 4.5S RNA. The protein component plays an auxiliary but essential role in vivo by binding to the 5'-leader sequence and broadening the substrate specificity of the ribozyme.</text>
</comment>
<comment type="catalytic activity">
    <reaction evidence="1">
        <text>Endonucleolytic cleavage of RNA, removing 5'-extranucleotides from tRNA precursor.</text>
        <dbReference type="EC" id="3.1.26.5"/>
    </reaction>
</comment>
<comment type="subunit">
    <text evidence="1">Consists of a catalytic RNA component (M1 or rnpB) and a protein subunit.</text>
</comment>
<comment type="similarity">
    <text evidence="1">Belongs to the RnpA family.</text>
</comment>
<accession>P66689</accession>
<accession>Q99QT2</accession>
<organism>
    <name type="scientific">Staphylococcus aureus (strain N315)</name>
    <dbReference type="NCBI Taxonomy" id="158879"/>
    <lineage>
        <taxon>Bacteria</taxon>
        <taxon>Bacillati</taxon>
        <taxon>Bacillota</taxon>
        <taxon>Bacilli</taxon>
        <taxon>Bacillales</taxon>
        <taxon>Staphylococcaceae</taxon>
        <taxon>Staphylococcus</taxon>
    </lineage>
</organism>
<name>RNPA_STAAN</name>
<evidence type="ECO:0000255" key="1">
    <source>
        <dbReference type="HAMAP-Rule" id="MF_00227"/>
    </source>
</evidence>
<sequence length="115" mass="13426">MEKAYRIKKNADFQRIYKKGHSVANRQFVVYTCNNKEIDHFRLGISVSKKLGNAVLRNKIKRAIRENFKVHKSHILAKDIIVIARQPAKDMTTLQIQNSLEHVLKIAKVFNKKIK</sequence>
<keyword id="KW-0255">Endonuclease</keyword>
<keyword id="KW-0378">Hydrolase</keyword>
<keyword id="KW-0540">Nuclease</keyword>
<keyword id="KW-0694">RNA-binding</keyword>
<keyword id="KW-0819">tRNA processing</keyword>
<feature type="chain" id="PRO_0000198527" description="Ribonuclease P protein component">
    <location>
        <begin position="1"/>
        <end position="115"/>
    </location>
</feature>
<reference key="1">
    <citation type="journal article" date="2001" name="Lancet">
        <title>Whole genome sequencing of meticillin-resistant Staphylococcus aureus.</title>
        <authorList>
            <person name="Kuroda M."/>
            <person name="Ohta T."/>
            <person name="Uchiyama I."/>
            <person name="Baba T."/>
            <person name="Yuzawa H."/>
            <person name="Kobayashi I."/>
            <person name="Cui L."/>
            <person name="Oguchi A."/>
            <person name="Aoki K."/>
            <person name="Nagai Y."/>
            <person name="Lian J.-Q."/>
            <person name="Ito T."/>
            <person name="Kanamori M."/>
            <person name="Matsumaru H."/>
            <person name="Maruyama A."/>
            <person name="Murakami H."/>
            <person name="Hosoyama A."/>
            <person name="Mizutani-Ui Y."/>
            <person name="Takahashi N.K."/>
            <person name="Sawano T."/>
            <person name="Inoue R."/>
            <person name="Kaito C."/>
            <person name="Sekimizu K."/>
            <person name="Hirakawa H."/>
            <person name="Kuhara S."/>
            <person name="Goto S."/>
            <person name="Yabuzaki J."/>
            <person name="Kanehisa M."/>
            <person name="Yamashita A."/>
            <person name="Oshima K."/>
            <person name="Furuya K."/>
            <person name="Yoshino C."/>
            <person name="Shiba T."/>
            <person name="Hattori M."/>
            <person name="Ogasawara N."/>
            <person name="Hayashi H."/>
            <person name="Hiramatsu K."/>
        </authorList>
    </citation>
    <scope>NUCLEOTIDE SEQUENCE [LARGE SCALE GENOMIC DNA]</scope>
    <source>
        <strain>N315</strain>
    </source>
</reference>